<keyword id="KW-0131">Cell cycle</keyword>
<keyword id="KW-0132">Cell division</keyword>
<keyword id="KW-0342">GTP-binding</keyword>
<keyword id="KW-0460">Magnesium</keyword>
<keyword id="KW-0479">Metal-binding</keyword>
<keyword id="KW-0547">Nucleotide-binding</keyword>
<keyword id="KW-1185">Reference proteome</keyword>
<keyword id="KW-0717">Septation</keyword>
<dbReference type="EMBL" id="CP001098">
    <property type="protein sequence ID" value="ACL70239.1"/>
    <property type="molecule type" value="Genomic_DNA"/>
</dbReference>
<dbReference type="RefSeq" id="WP_012636422.1">
    <property type="nucleotide sequence ID" value="NC_011899.1"/>
</dbReference>
<dbReference type="SMR" id="B8CY70"/>
<dbReference type="STRING" id="373903.Hore_14900"/>
<dbReference type="KEGG" id="hor:Hore_14900"/>
<dbReference type="eggNOG" id="COG0218">
    <property type="taxonomic scope" value="Bacteria"/>
</dbReference>
<dbReference type="HOGENOM" id="CLU_033732_3_0_9"/>
<dbReference type="OrthoDB" id="9804921at2"/>
<dbReference type="Proteomes" id="UP000000719">
    <property type="component" value="Chromosome"/>
</dbReference>
<dbReference type="GO" id="GO:0005829">
    <property type="term" value="C:cytosol"/>
    <property type="evidence" value="ECO:0007669"/>
    <property type="project" value="TreeGrafter"/>
</dbReference>
<dbReference type="GO" id="GO:0005525">
    <property type="term" value="F:GTP binding"/>
    <property type="evidence" value="ECO:0007669"/>
    <property type="project" value="UniProtKB-UniRule"/>
</dbReference>
<dbReference type="GO" id="GO:0046872">
    <property type="term" value="F:metal ion binding"/>
    <property type="evidence" value="ECO:0007669"/>
    <property type="project" value="UniProtKB-KW"/>
</dbReference>
<dbReference type="GO" id="GO:0000917">
    <property type="term" value="P:division septum assembly"/>
    <property type="evidence" value="ECO:0007669"/>
    <property type="project" value="UniProtKB-KW"/>
</dbReference>
<dbReference type="CDD" id="cd01876">
    <property type="entry name" value="YihA_EngB"/>
    <property type="match status" value="1"/>
</dbReference>
<dbReference type="FunFam" id="3.40.50.300:FF:000098">
    <property type="entry name" value="Probable GTP-binding protein EngB"/>
    <property type="match status" value="1"/>
</dbReference>
<dbReference type="Gene3D" id="3.40.50.300">
    <property type="entry name" value="P-loop containing nucleotide triphosphate hydrolases"/>
    <property type="match status" value="1"/>
</dbReference>
<dbReference type="HAMAP" id="MF_00321">
    <property type="entry name" value="GTPase_EngB"/>
    <property type="match status" value="1"/>
</dbReference>
<dbReference type="InterPro" id="IPR030393">
    <property type="entry name" value="G_ENGB_dom"/>
</dbReference>
<dbReference type="InterPro" id="IPR006073">
    <property type="entry name" value="GTP-bd"/>
</dbReference>
<dbReference type="InterPro" id="IPR019987">
    <property type="entry name" value="GTP-bd_ribosome_bio_YsxC"/>
</dbReference>
<dbReference type="InterPro" id="IPR027417">
    <property type="entry name" value="P-loop_NTPase"/>
</dbReference>
<dbReference type="NCBIfam" id="TIGR03598">
    <property type="entry name" value="GTPase_YsxC"/>
    <property type="match status" value="1"/>
</dbReference>
<dbReference type="PANTHER" id="PTHR11649:SF13">
    <property type="entry name" value="ENGB-TYPE G DOMAIN-CONTAINING PROTEIN"/>
    <property type="match status" value="1"/>
</dbReference>
<dbReference type="PANTHER" id="PTHR11649">
    <property type="entry name" value="MSS1/TRME-RELATED GTP-BINDING PROTEIN"/>
    <property type="match status" value="1"/>
</dbReference>
<dbReference type="Pfam" id="PF01926">
    <property type="entry name" value="MMR_HSR1"/>
    <property type="match status" value="1"/>
</dbReference>
<dbReference type="SUPFAM" id="SSF52540">
    <property type="entry name" value="P-loop containing nucleoside triphosphate hydrolases"/>
    <property type="match status" value="1"/>
</dbReference>
<dbReference type="PROSITE" id="PS51706">
    <property type="entry name" value="G_ENGB"/>
    <property type="match status" value="1"/>
</dbReference>
<protein>
    <recommendedName>
        <fullName evidence="1">Probable GTP-binding protein EngB</fullName>
    </recommendedName>
</protein>
<evidence type="ECO:0000255" key="1">
    <source>
        <dbReference type="HAMAP-Rule" id="MF_00321"/>
    </source>
</evidence>
<comment type="function">
    <text evidence="1">Necessary for normal cell division and for the maintenance of normal septation.</text>
</comment>
<comment type="cofactor">
    <cofactor evidence="1">
        <name>Mg(2+)</name>
        <dbReference type="ChEBI" id="CHEBI:18420"/>
    </cofactor>
</comment>
<comment type="similarity">
    <text evidence="1">Belongs to the TRAFAC class TrmE-Era-EngA-EngB-Septin-like GTPase superfamily. EngB GTPase family.</text>
</comment>
<sequence length="199" mass="22694">MKIKNPRFVISAYDFDDFPTHNWPEFAFSGRSNVGKSSLINTLVNRRKLARTSSRPGRTQSINFFNIDDRFYLVDLPGYGFANVPRKVKEEWGRLIEGYLNNRPNLAGIVQIVDARHKPTRDDLMMVDWIKASGIPCLIAATKVDKISRGSRKKQEELIKKTLVLEDFDGQFTFFSAKTGEGKKQVGKFILDLVDSFKG</sequence>
<feature type="chain" id="PRO_1000189924" description="Probable GTP-binding protein EngB">
    <location>
        <begin position="1"/>
        <end position="199"/>
    </location>
</feature>
<feature type="domain" description="EngB-type G" evidence="1">
    <location>
        <begin position="22"/>
        <end position="196"/>
    </location>
</feature>
<feature type="binding site" evidence="1">
    <location>
        <begin position="30"/>
        <end position="37"/>
    </location>
    <ligand>
        <name>GTP</name>
        <dbReference type="ChEBI" id="CHEBI:37565"/>
    </ligand>
</feature>
<feature type="binding site" evidence="1">
    <location>
        <position position="37"/>
    </location>
    <ligand>
        <name>Mg(2+)</name>
        <dbReference type="ChEBI" id="CHEBI:18420"/>
    </ligand>
</feature>
<feature type="binding site" evidence="1">
    <location>
        <begin position="57"/>
        <end position="61"/>
    </location>
    <ligand>
        <name>GTP</name>
        <dbReference type="ChEBI" id="CHEBI:37565"/>
    </ligand>
</feature>
<feature type="binding site" evidence="1">
    <location>
        <position position="59"/>
    </location>
    <ligand>
        <name>Mg(2+)</name>
        <dbReference type="ChEBI" id="CHEBI:18420"/>
    </ligand>
</feature>
<feature type="binding site" evidence="1">
    <location>
        <begin position="75"/>
        <end position="78"/>
    </location>
    <ligand>
        <name>GTP</name>
        <dbReference type="ChEBI" id="CHEBI:37565"/>
    </ligand>
</feature>
<feature type="binding site" evidence="1">
    <location>
        <begin position="142"/>
        <end position="145"/>
    </location>
    <ligand>
        <name>GTP</name>
        <dbReference type="ChEBI" id="CHEBI:37565"/>
    </ligand>
</feature>
<feature type="binding site" evidence="1">
    <location>
        <begin position="175"/>
        <end position="177"/>
    </location>
    <ligand>
        <name>GTP</name>
        <dbReference type="ChEBI" id="CHEBI:37565"/>
    </ligand>
</feature>
<accession>B8CY70</accession>
<reference key="1">
    <citation type="journal article" date="2009" name="PLoS ONE">
        <title>Genome analysis of the anaerobic thermohalophilic bacterium Halothermothrix orenii.</title>
        <authorList>
            <person name="Mavromatis K."/>
            <person name="Ivanova N."/>
            <person name="Anderson I."/>
            <person name="Lykidis A."/>
            <person name="Hooper S.D."/>
            <person name="Sun H."/>
            <person name="Kunin V."/>
            <person name="Lapidus A."/>
            <person name="Hugenholtz P."/>
            <person name="Patel B."/>
            <person name="Kyrpides N.C."/>
        </authorList>
    </citation>
    <scope>NUCLEOTIDE SEQUENCE [LARGE SCALE GENOMIC DNA]</scope>
    <source>
        <strain>H 168 / OCM 544 / DSM 9562</strain>
    </source>
</reference>
<proteinExistence type="inferred from homology"/>
<organism>
    <name type="scientific">Halothermothrix orenii (strain H 168 / OCM 544 / DSM 9562)</name>
    <dbReference type="NCBI Taxonomy" id="373903"/>
    <lineage>
        <taxon>Bacteria</taxon>
        <taxon>Bacillati</taxon>
        <taxon>Bacillota</taxon>
        <taxon>Clostridia</taxon>
        <taxon>Halanaerobiales</taxon>
        <taxon>Halothermotrichaceae</taxon>
        <taxon>Halothermothrix</taxon>
    </lineage>
</organism>
<gene>
    <name evidence="1" type="primary">engB</name>
    <name type="ordered locus">Hore_14900</name>
</gene>
<name>ENGB_HALOH</name>